<proteinExistence type="evidence at protein level"/>
<comment type="function">
    <text evidence="3 4">Substrate recognition component of a SCF (SKP1-CUL1-F-box protein) E3 ubiquitin-protein ligase complex (PubMed:22306998, PubMed:25778398). During mitosis, it mediates the ubiquitination and subsequent proteasomal degradation of AURKA, causing mitotic arrest (PubMed:22306998). It also regulates mitochondrial function by mediating the ubiquitination and proteasomal degradation of the apoptosis inhibitor BIRC5 (PubMed:25778398).</text>
</comment>
<comment type="pathway">
    <text evidence="3 4">Protein modification; protein ubiquitination.</text>
</comment>
<comment type="subunit">
    <text evidence="3 4">Part of the SCF (SKP1-CUL1-F-box) E3 ubiquitin-protein ligase complex SCF(FBXL7) composed of CUL1, SKP1, RBX1 and FBXL7 (PubMed:22306998). Interacts with AURKA; interaction takes place during mitosis but not in interphase (PubMed:22306998). Interacts with BIRC5; this interaction allows BIRC5 to be polyubiquitinated by the SCF(FBXL7) E3 ubiquitin-protein ligase complex (PubMed:25778398).</text>
</comment>
<comment type="subcellular location">
    <subcellularLocation>
        <location evidence="3">Cytoplasm</location>
        <location evidence="3">Cytoskeleton</location>
        <location evidence="3">Microtubule organizing center</location>
        <location evidence="3">Centrosome</location>
    </subcellularLocation>
    <text evidence="3">Localizes to the centrosome during spindle formation.</text>
</comment>
<comment type="similarity">
    <text evidence="5">Belongs to the FBXL7 family.</text>
</comment>
<comment type="sequence caution" evidence="5">
    <conflict type="erroneous initiation">
        <sequence resource="EMBL-CDS" id="BAC98037"/>
    </conflict>
</comment>
<evidence type="ECO:0000255" key="1">
    <source>
        <dbReference type="PROSITE-ProRule" id="PRU00080"/>
    </source>
</evidence>
<evidence type="ECO:0000256" key="2">
    <source>
        <dbReference type="SAM" id="MobiDB-lite"/>
    </source>
</evidence>
<evidence type="ECO:0000269" key="3">
    <source>
    </source>
</evidence>
<evidence type="ECO:0000269" key="4">
    <source>
    </source>
</evidence>
<evidence type="ECO:0000305" key="5"/>
<organism>
    <name type="scientific">Mus musculus</name>
    <name type="common">Mouse</name>
    <dbReference type="NCBI Taxonomy" id="10090"/>
    <lineage>
        <taxon>Eukaryota</taxon>
        <taxon>Metazoa</taxon>
        <taxon>Chordata</taxon>
        <taxon>Craniata</taxon>
        <taxon>Vertebrata</taxon>
        <taxon>Euteleostomi</taxon>
        <taxon>Mammalia</taxon>
        <taxon>Eutheria</taxon>
        <taxon>Euarchontoglires</taxon>
        <taxon>Glires</taxon>
        <taxon>Rodentia</taxon>
        <taxon>Myomorpha</taxon>
        <taxon>Muroidea</taxon>
        <taxon>Muridae</taxon>
        <taxon>Murinae</taxon>
        <taxon>Mus</taxon>
        <taxon>Mus</taxon>
    </lineage>
</organism>
<feature type="chain" id="PRO_0000307720" description="F-box/LRR-repeat protein 7">
    <location>
        <begin position="1"/>
        <end position="491"/>
    </location>
</feature>
<feature type="domain" description="F-box" evidence="1">
    <location>
        <begin position="111"/>
        <end position="157"/>
    </location>
</feature>
<feature type="repeat" description="LRR 1">
    <location>
        <begin position="185"/>
        <end position="210"/>
    </location>
</feature>
<feature type="repeat" description="LRR 2">
    <location>
        <begin position="211"/>
        <end position="236"/>
    </location>
</feature>
<feature type="repeat" description="LRR 3">
    <location>
        <begin position="237"/>
        <end position="262"/>
    </location>
</feature>
<feature type="repeat" description="LRR 4">
    <location>
        <begin position="271"/>
        <end position="296"/>
    </location>
</feature>
<feature type="repeat" description="LRR 5">
    <location>
        <begin position="297"/>
        <end position="322"/>
    </location>
</feature>
<feature type="repeat" description="LRR 6">
    <location>
        <begin position="323"/>
        <end position="348"/>
    </location>
</feature>
<feature type="repeat" description="LRR 7">
    <location>
        <begin position="349"/>
        <end position="374"/>
    </location>
</feature>
<feature type="repeat" description="LRR 8">
    <location>
        <begin position="375"/>
        <end position="400"/>
    </location>
</feature>
<feature type="repeat" description="LRR 9">
    <location>
        <begin position="401"/>
        <end position="426"/>
    </location>
</feature>
<feature type="repeat" description="LRR 10">
    <location>
        <begin position="427"/>
        <end position="452"/>
    </location>
</feature>
<feature type="region of interest" description="Disordered" evidence="2">
    <location>
        <begin position="1"/>
        <end position="79"/>
    </location>
</feature>
<feature type="compositionally biased region" description="Low complexity" evidence="2">
    <location>
        <begin position="16"/>
        <end position="26"/>
    </location>
</feature>
<feature type="compositionally biased region" description="Polar residues" evidence="2">
    <location>
        <begin position="27"/>
        <end position="55"/>
    </location>
</feature>
<protein>
    <recommendedName>
        <fullName>F-box/LRR-repeat protein 7</fullName>
    </recommendedName>
    <alternativeName>
        <fullName>F-box and leucine-rich repeat protein 7</fullName>
    </alternativeName>
</protein>
<sequence>MGANNGKQYGSEGKGSSSVSSDVSSSTDHTPTKAQRNVATSEDSDLSMRTLSTPSPALICPPTLPGFQNGRGSSTSSSSITGETVAMVHSPPPTRLTHPLIRLASRPQKEQASIDRLPDHSMVQIFSFLPTNQLCRCARVCRRWYNLAWDPRLWRTIRLTGETINVDRALKVLTRRLCQDTPNVCLMLETVIVSGCRRLTDRGLYTIAQCCPELRRLEVSGCYNISNEAVFDVVSLCPNLEHLDVSGCSKVTCISLTREASIKLSPLHGKQISIRYLDMTDCFVLEDEGLHTIAAHCTQLTHLYLRRCVRLTDEGLRYLVIYCTSIKELSVSDCRFVSDFGLREIAKLESRLRYLSIAHCGRITDVGIRYVAKYCSKLRYLNARGCEGITDHGVEYLAKNCTKLKSLDIGKCPLVSDTGLESLALNCFNLKRLSLKSCESITGQGLQIVAANCFDLQMLNVQDCEVSVEALRFVKRHCKRCVIEHTNPAFF</sequence>
<name>FBXL7_MOUSE</name>
<gene>
    <name type="primary">Fbxl7</name>
    <name type="synonym">Kiaa0840</name>
</gene>
<accession>Q5BJ29</accession>
<accession>Q6ZQ36</accession>
<keyword id="KW-0131">Cell cycle</keyword>
<keyword id="KW-0132">Cell division</keyword>
<keyword id="KW-0963">Cytoplasm</keyword>
<keyword id="KW-0206">Cytoskeleton</keyword>
<keyword id="KW-0433">Leucine-rich repeat</keyword>
<keyword id="KW-0498">Mitosis</keyword>
<keyword id="KW-1185">Reference proteome</keyword>
<keyword id="KW-0677">Repeat</keyword>
<keyword id="KW-0833">Ubl conjugation pathway</keyword>
<dbReference type="EMBL" id="AK129227">
    <property type="protein sequence ID" value="BAC98037.1"/>
    <property type="status" value="ALT_INIT"/>
    <property type="molecule type" value="mRNA"/>
</dbReference>
<dbReference type="EMBL" id="BC091646">
    <property type="protein sequence ID" value="AAH91646.1"/>
    <property type="molecule type" value="mRNA"/>
</dbReference>
<dbReference type="CCDS" id="CCDS37052.1"/>
<dbReference type="RefSeq" id="NP_795933.2">
    <property type="nucleotide sequence ID" value="NM_176959.3"/>
</dbReference>
<dbReference type="SMR" id="Q5BJ29"/>
<dbReference type="BioGRID" id="243078">
    <property type="interactions" value="2"/>
</dbReference>
<dbReference type="FunCoup" id="Q5BJ29">
    <property type="interactions" value="109"/>
</dbReference>
<dbReference type="IntAct" id="Q5BJ29">
    <property type="interactions" value="1"/>
</dbReference>
<dbReference type="STRING" id="10090.ENSMUSP00000061305"/>
<dbReference type="GlyGen" id="Q5BJ29">
    <property type="glycosylation" value="1 site, 1 O-linked glycan (1 site)"/>
</dbReference>
<dbReference type="iPTMnet" id="Q5BJ29"/>
<dbReference type="PhosphoSitePlus" id="Q5BJ29"/>
<dbReference type="jPOST" id="Q5BJ29"/>
<dbReference type="PaxDb" id="10090-ENSMUSP00000061305"/>
<dbReference type="PeptideAtlas" id="Q5BJ29"/>
<dbReference type="ProteomicsDB" id="271557"/>
<dbReference type="Antibodypedia" id="5190">
    <property type="antibodies" value="64 antibodies from 19 providers"/>
</dbReference>
<dbReference type="DNASU" id="448987"/>
<dbReference type="Ensembl" id="ENSMUST00000059204.11">
    <property type="protein sequence ID" value="ENSMUSP00000061305.10"/>
    <property type="gene ID" value="ENSMUSG00000043556.11"/>
</dbReference>
<dbReference type="GeneID" id="448987"/>
<dbReference type="KEGG" id="mmu:448987"/>
<dbReference type="UCSC" id="uc007vjn.1">
    <property type="organism name" value="mouse"/>
</dbReference>
<dbReference type="AGR" id="MGI:3052506"/>
<dbReference type="CTD" id="23194"/>
<dbReference type="MGI" id="MGI:3052506">
    <property type="gene designation" value="Fbxl7"/>
</dbReference>
<dbReference type="VEuPathDB" id="HostDB:ENSMUSG00000043556"/>
<dbReference type="eggNOG" id="KOG1947">
    <property type="taxonomic scope" value="Eukaryota"/>
</dbReference>
<dbReference type="GeneTree" id="ENSGT00940000158009"/>
<dbReference type="HOGENOM" id="CLU_016072_5_0_1"/>
<dbReference type="InParanoid" id="Q5BJ29"/>
<dbReference type="OMA" id="ETVHVDR"/>
<dbReference type="OrthoDB" id="423607at2759"/>
<dbReference type="PhylomeDB" id="Q5BJ29"/>
<dbReference type="TreeFam" id="TF313434"/>
<dbReference type="Reactome" id="R-MMU-8854050">
    <property type="pathway name" value="FBXL7 down-regulates AURKA during mitotic entry and in early mitosis"/>
</dbReference>
<dbReference type="Reactome" id="R-MMU-8951664">
    <property type="pathway name" value="Neddylation"/>
</dbReference>
<dbReference type="Reactome" id="R-MMU-983168">
    <property type="pathway name" value="Antigen processing: Ubiquitination &amp; Proteasome degradation"/>
</dbReference>
<dbReference type="UniPathway" id="UPA00143"/>
<dbReference type="BioGRID-ORCS" id="448987">
    <property type="hits" value="1 hit in 77 CRISPR screens"/>
</dbReference>
<dbReference type="ChiTaRS" id="Fbxl7">
    <property type="organism name" value="mouse"/>
</dbReference>
<dbReference type="PRO" id="PR:Q5BJ29"/>
<dbReference type="Proteomes" id="UP000000589">
    <property type="component" value="Chromosome 15"/>
</dbReference>
<dbReference type="RNAct" id="Q5BJ29">
    <property type="molecule type" value="protein"/>
</dbReference>
<dbReference type="Bgee" id="ENSMUSG00000043556">
    <property type="expression patterns" value="Expressed in manus and 169 other cell types or tissues"/>
</dbReference>
<dbReference type="GO" id="GO:0005813">
    <property type="term" value="C:centrosome"/>
    <property type="evidence" value="ECO:0000314"/>
    <property type="project" value="UniProtKB"/>
</dbReference>
<dbReference type="GO" id="GO:0005737">
    <property type="term" value="C:cytoplasm"/>
    <property type="evidence" value="ECO:0007669"/>
    <property type="project" value="UniProtKB-KW"/>
</dbReference>
<dbReference type="GO" id="GO:0019005">
    <property type="term" value="C:SCF ubiquitin ligase complex"/>
    <property type="evidence" value="ECO:0000314"/>
    <property type="project" value="UniProtKB"/>
</dbReference>
<dbReference type="GO" id="GO:0051301">
    <property type="term" value="P:cell division"/>
    <property type="evidence" value="ECO:0007669"/>
    <property type="project" value="UniProtKB-KW"/>
</dbReference>
<dbReference type="GO" id="GO:0000086">
    <property type="term" value="P:G2/M transition of mitotic cell cycle"/>
    <property type="evidence" value="ECO:0000314"/>
    <property type="project" value="UniProtKB"/>
</dbReference>
<dbReference type="GO" id="GO:0000278">
    <property type="term" value="P:mitotic cell cycle"/>
    <property type="evidence" value="ECO:0000315"/>
    <property type="project" value="UniProtKB"/>
</dbReference>
<dbReference type="GO" id="GO:0000209">
    <property type="term" value="P:protein polyubiquitination"/>
    <property type="evidence" value="ECO:0000315"/>
    <property type="project" value="UniProtKB"/>
</dbReference>
<dbReference type="GO" id="GO:0016567">
    <property type="term" value="P:protein ubiquitination"/>
    <property type="evidence" value="ECO:0000314"/>
    <property type="project" value="UniProtKB"/>
</dbReference>
<dbReference type="GO" id="GO:0031146">
    <property type="term" value="P:SCF-dependent proteasomal ubiquitin-dependent protein catabolic process"/>
    <property type="evidence" value="ECO:0000315"/>
    <property type="project" value="UniProtKB"/>
</dbReference>
<dbReference type="CDD" id="cd22120">
    <property type="entry name" value="F-box_FBXL7"/>
    <property type="match status" value="1"/>
</dbReference>
<dbReference type="FunFam" id="3.80.10.10:FF:000122">
    <property type="entry name" value="F-box/LRR-repeat protein 7 isoform X1"/>
    <property type="match status" value="1"/>
</dbReference>
<dbReference type="FunFam" id="3.80.10.10:FF:000126">
    <property type="entry name" value="F-box/LRR-repeat protein 7 isoform X1"/>
    <property type="match status" value="1"/>
</dbReference>
<dbReference type="FunFam" id="1.20.1280.50:FF:000018">
    <property type="entry name" value="F-box/LRR-repeat protein 7 isoform X2"/>
    <property type="match status" value="1"/>
</dbReference>
<dbReference type="Gene3D" id="1.20.1280.50">
    <property type="match status" value="1"/>
</dbReference>
<dbReference type="Gene3D" id="3.80.10.10">
    <property type="entry name" value="Ribonuclease Inhibitor"/>
    <property type="match status" value="2"/>
</dbReference>
<dbReference type="InterPro" id="IPR036047">
    <property type="entry name" value="F-box-like_dom_sf"/>
</dbReference>
<dbReference type="InterPro" id="IPR001810">
    <property type="entry name" value="F-box_dom"/>
</dbReference>
<dbReference type="InterPro" id="IPR001611">
    <property type="entry name" value="Leu-rich_rpt"/>
</dbReference>
<dbReference type="InterPro" id="IPR006553">
    <property type="entry name" value="Leu-rich_rpt_Cys-con_subtyp"/>
</dbReference>
<dbReference type="InterPro" id="IPR032675">
    <property type="entry name" value="LRR_dom_sf"/>
</dbReference>
<dbReference type="PANTHER" id="PTHR13318:SF50">
    <property type="entry name" value="F-BOX_LRR-REPEAT PROTEIN 7"/>
    <property type="match status" value="1"/>
</dbReference>
<dbReference type="PANTHER" id="PTHR13318">
    <property type="entry name" value="PARTNER OF PAIRED, ISOFORM B-RELATED"/>
    <property type="match status" value="1"/>
</dbReference>
<dbReference type="Pfam" id="PF12937">
    <property type="entry name" value="F-box-like"/>
    <property type="match status" value="1"/>
</dbReference>
<dbReference type="Pfam" id="PF13516">
    <property type="entry name" value="LRR_6"/>
    <property type="match status" value="5"/>
</dbReference>
<dbReference type="SMART" id="SM00256">
    <property type="entry name" value="FBOX"/>
    <property type="match status" value="1"/>
</dbReference>
<dbReference type="SMART" id="SM00367">
    <property type="entry name" value="LRR_CC"/>
    <property type="match status" value="10"/>
</dbReference>
<dbReference type="SUPFAM" id="SSF81383">
    <property type="entry name" value="F-box domain"/>
    <property type="match status" value="1"/>
</dbReference>
<dbReference type="SUPFAM" id="SSF52047">
    <property type="entry name" value="RNI-like"/>
    <property type="match status" value="1"/>
</dbReference>
<dbReference type="PROSITE" id="PS50181">
    <property type="entry name" value="FBOX"/>
    <property type="match status" value="1"/>
</dbReference>
<reference key="1">
    <citation type="journal article" date="2003" name="DNA Res.">
        <title>Prediction of the coding sequences of mouse homologues of KIAA gene: III. The complete nucleotide sequences of 500 mouse KIAA-homologous cDNAs identified by screening of terminal sequences of cDNA clones randomly sampled from size-fractionated libraries.</title>
        <authorList>
            <person name="Okazaki N."/>
            <person name="Kikuno R."/>
            <person name="Ohara R."/>
            <person name="Inamoto S."/>
            <person name="Koseki H."/>
            <person name="Hiraoka S."/>
            <person name="Saga Y."/>
            <person name="Nagase T."/>
            <person name="Ohara O."/>
            <person name="Koga H."/>
        </authorList>
    </citation>
    <scope>NUCLEOTIDE SEQUENCE [LARGE SCALE MRNA]</scope>
    <source>
        <tissue>Embryonic tail</tissue>
    </source>
</reference>
<reference key="2">
    <citation type="journal article" date="2004" name="Genome Res.">
        <title>The status, quality, and expansion of the NIH full-length cDNA project: the Mammalian Gene Collection (MGC).</title>
        <authorList>
            <consortium name="The MGC Project Team"/>
        </authorList>
    </citation>
    <scope>NUCLEOTIDE SEQUENCE [LARGE SCALE MRNA]</scope>
    <source>
        <strain>C57BL/6J</strain>
        <tissue>Brain</tissue>
    </source>
</reference>
<reference key="3">
    <citation type="journal article" date="2012" name="Cell Cycle">
        <title>Novel E3 ligase component FBXL7 ubiquitinates and degrades Aurora A, causing mitotic arrest.</title>
        <authorList>
            <person name="Coon T.A."/>
            <person name="Glasser J.R."/>
            <person name="Mallampalli R.K."/>
            <person name="Chen B.B."/>
        </authorList>
    </citation>
    <scope>FUNCTION</scope>
    <scope>SUBCELLULAR LOCATION</scope>
    <scope>IDENTIFICATION IN A SCF PROTEIN LIGASE COMPLEX</scope>
    <scope>INTERACTION WITH AURKA</scope>
</reference>
<reference key="4">
    <citation type="journal article" date="2015" name="J. Biol. Chem.">
        <title>The Proapoptotic F-box Protein Fbxl7 Regulates Mitochondrial Function by Mediating the Ubiquitylation and Proteasomal Degradation of Survivin.</title>
        <authorList>
            <person name="Liu Y."/>
            <person name="Lear T."/>
            <person name="Iannone O."/>
            <person name="Shiva S."/>
            <person name="Corey C."/>
            <person name="Rajbhandari S."/>
            <person name="Jerome J."/>
            <person name="Chen B.B."/>
            <person name="Mallampalli R.K."/>
        </authorList>
    </citation>
    <scope>FUNCTION</scope>
    <scope>INTERACTION WITH BIRC5</scope>
</reference>